<evidence type="ECO:0000255" key="1">
    <source>
        <dbReference type="HAMAP-Rule" id="MF_01151"/>
    </source>
</evidence>
<reference key="1">
    <citation type="journal article" date="2000" name="Science">
        <title>Complete genome sequence of Neisseria meningitidis serogroup B strain MC58.</title>
        <authorList>
            <person name="Tettelin H."/>
            <person name="Saunders N.J."/>
            <person name="Heidelberg J.F."/>
            <person name="Jeffries A.C."/>
            <person name="Nelson K.E."/>
            <person name="Eisen J.A."/>
            <person name="Ketchum K.A."/>
            <person name="Hood D.W."/>
            <person name="Peden J.F."/>
            <person name="Dodson R.J."/>
            <person name="Nelson W.C."/>
            <person name="Gwinn M.L."/>
            <person name="DeBoy R.T."/>
            <person name="Peterson J.D."/>
            <person name="Hickey E.K."/>
            <person name="Haft D.H."/>
            <person name="Salzberg S.L."/>
            <person name="White O."/>
            <person name="Fleischmann R.D."/>
            <person name="Dougherty B.A."/>
            <person name="Mason T.M."/>
            <person name="Ciecko A."/>
            <person name="Parksey D.S."/>
            <person name="Blair E."/>
            <person name="Cittone H."/>
            <person name="Clark E.B."/>
            <person name="Cotton M.D."/>
            <person name="Utterback T.R."/>
            <person name="Khouri H.M."/>
            <person name="Qin H."/>
            <person name="Vamathevan J.J."/>
            <person name="Gill J."/>
            <person name="Scarlato V."/>
            <person name="Masignani V."/>
            <person name="Pizza M."/>
            <person name="Grandi G."/>
            <person name="Sun L."/>
            <person name="Smith H.O."/>
            <person name="Fraser C.M."/>
            <person name="Moxon E.R."/>
            <person name="Rappuoli R."/>
            <person name="Venter J.C."/>
        </authorList>
    </citation>
    <scope>NUCLEOTIDE SEQUENCE [LARGE SCALE GENOMIC DNA]</scope>
    <source>
        <strain>ATCC BAA-335 / MC58</strain>
    </source>
</reference>
<gene>
    <name evidence="1" type="primary">grpE</name>
    <name type="ordered locus">NMB0561</name>
</gene>
<dbReference type="EMBL" id="AE002098">
    <property type="protein sequence ID" value="AAF40989.1"/>
    <property type="molecule type" value="Genomic_DNA"/>
</dbReference>
<dbReference type="RefSeq" id="NP_273605.1">
    <property type="nucleotide sequence ID" value="NC_003112.2"/>
</dbReference>
<dbReference type="RefSeq" id="WP_002214370.1">
    <property type="nucleotide sequence ID" value="NC_003112.2"/>
</dbReference>
<dbReference type="SMR" id="Q7DDM9"/>
<dbReference type="FunCoup" id="Q7DDM9">
    <property type="interactions" value="450"/>
</dbReference>
<dbReference type="STRING" id="122586.NMB0561"/>
<dbReference type="PaxDb" id="122586-NMB0561"/>
<dbReference type="GeneID" id="93386624"/>
<dbReference type="KEGG" id="nme:NMB0561"/>
<dbReference type="PATRIC" id="fig|122586.8.peg.719"/>
<dbReference type="HOGENOM" id="CLU_057217_6_2_4"/>
<dbReference type="InParanoid" id="Q7DDM9"/>
<dbReference type="OrthoDB" id="9789811at2"/>
<dbReference type="Proteomes" id="UP000000425">
    <property type="component" value="Chromosome"/>
</dbReference>
<dbReference type="GO" id="GO:0005829">
    <property type="term" value="C:cytosol"/>
    <property type="evidence" value="ECO:0000318"/>
    <property type="project" value="GO_Central"/>
</dbReference>
<dbReference type="GO" id="GO:0000774">
    <property type="term" value="F:adenyl-nucleotide exchange factor activity"/>
    <property type="evidence" value="ECO:0000318"/>
    <property type="project" value="GO_Central"/>
</dbReference>
<dbReference type="GO" id="GO:0042803">
    <property type="term" value="F:protein homodimerization activity"/>
    <property type="evidence" value="ECO:0007669"/>
    <property type="project" value="InterPro"/>
</dbReference>
<dbReference type="GO" id="GO:0051087">
    <property type="term" value="F:protein-folding chaperone binding"/>
    <property type="evidence" value="ECO:0007669"/>
    <property type="project" value="InterPro"/>
</dbReference>
<dbReference type="GO" id="GO:0051082">
    <property type="term" value="F:unfolded protein binding"/>
    <property type="evidence" value="ECO:0000318"/>
    <property type="project" value="GO_Central"/>
</dbReference>
<dbReference type="GO" id="GO:0006457">
    <property type="term" value="P:protein folding"/>
    <property type="evidence" value="ECO:0007669"/>
    <property type="project" value="InterPro"/>
</dbReference>
<dbReference type="CDD" id="cd00446">
    <property type="entry name" value="GrpE"/>
    <property type="match status" value="1"/>
</dbReference>
<dbReference type="FunFam" id="2.30.22.10:FF:000001">
    <property type="entry name" value="Protein GrpE"/>
    <property type="match status" value="1"/>
</dbReference>
<dbReference type="Gene3D" id="3.90.20.20">
    <property type="match status" value="1"/>
</dbReference>
<dbReference type="Gene3D" id="2.30.22.10">
    <property type="entry name" value="Head domain of nucleotide exchange factor GrpE"/>
    <property type="match status" value="1"/>
</dbReference>
<dbReference type="HAMAP" id="MF_01151">
    <property type="entry name" value="GrpE"/>
    <property type="match status" value="1"/>
</dbReference>
<dbReference type="InterPro" id="IPR000740">
    <property type="entry name" value="GrpE"/>
</dbReference>
<dbReference type="InterPro" id="IPR013805">
    <property type="entry name" value="GrpE_coiled_coil"/>
</dbReference>
<dbReference type="InterPro" id="IPR009012">
    <property type="entry name" value="GrpE_head"/>
</dbReference>
<dbReference type="NCBIfam" id="NF010737">
    <property type="entry name" value="PRK14139.1"/>
    <property type="match status" value="1"/>
</dbReference>
<dbReference type="NCBIfam" id="NF010738">
    <property type="entry name" value="PRK14140.1"/>
    <property type="match status" value="1"/>
</dbReference>
<dbReference type="PANTHER" id="PTHR21237">
    <property type="entry name" value="GRPE PROTEIN"/>
    <property type="match status" value="1"/>
</dbReference>
<dbReference type="PANTHER" id="PTHR21237:SF23">
    <property type="entry name" value="GRPE PROTEIN HOMOLOG, MITOCHONDRIAL"/>
    <property type="match status" value="1"/>
</dbReference>
<dbReference type="Pfam" id="PF01025">
    <property type="entry name" value="GrpE"/>
    <property type="match status" value="1"/>
</dbReference>
<dbReference type="PRINTS" id="PR00773">
    <property type="entry name" value="GRPEPROTEIN"/>
</dbReference>
<dbReference type="SUPFAM" id="SSF58014">
    <property type="entry name" value="Coiled-coil domain of nucleotide exchange factor GrpE"/>
    <property type="match status" value="1"/>
</dbReference>
<dbReference type="SUPFAM" id="SSF51064">
    <property type="entry name" value="Head domain of nucleotide exchange factor GrpE"/>
    <property type="match status" value="1"/>
</dbReference>
<dbReference type="PROSITE" id="PS01071">
    <property type="entry name" value="GRPE"/>
    <property type="match status" value="1"/>
</dbReference>
<name>GRPE_NEIMB</name>
<sequence length="192" mass="21322">MSEQTQQQNSEEAVENVEAVETVETVGNADGVQEQAAAEPAYEDLQARIAELEAQLKDEQLRALANEQNLRRRHQQEIADTHKFAGQKFAVEMLPVKDYLEMALLDQSGNFDALKMGVQMTLNELQKAFDATQIKEINPKAGDKLDPNIHQAMQAVASEQEPNTVVGVMKKGYTLSDRVLRPAMVTVAQKEA</sequence>
<keyword id="KW-0143">Chaperone</keyword>
<keyword id="KW-0963">Cytoplasm</keyword>
<keyword id="KW-1185">Reference proteome</keyword>
<keyword id="KW-0346">Stress response</keyword>
<comment type="function">
    <text evidence="1">Participates actively in the response to hyperosmotic and heat shock by preventing the aggregation of stress-denatured proteins, in association with DnaK and GrpE. It is the nucleotide exchange factor for DnaK and may function as a thermosensor. Unfolded proteins bind initially to DnaJ; upon interaction with the DnaJ-bound protein, DnaK hydrolyzes its bound ATP, resulting in the formation of a stable complex. GrpE releases ADP from DnaK; ATP binding to DnaK triggers the release of the substrate protein, thus completing the reaction cycle. Several rounds of ATP-dependent interactions between DnaJ, DnaK and GrpE are required for fully efficient folding.</text>
</comment>
<comment type="subunit">
    <text evidence="1">Homodimer.</text>
</comment>
<comment type="subcellular location">
    <subcellularLocation>
        <location evidence="1">Cytoplasm</location>
    </subcellularLocation>
</comment>
<comment type="similarity">
    <text evidence="1">Belongs to the GrpE family.</text>
</comment>
<proteinExistence type="inferred from homology"/>
<feature type="chain" id="PRO_0000113826" description="Protein GrpE">
    <location>
        <begin position="1"/>
        <end position="192"/>
    </location>
</feature>
<organism>
    <name type="scientific">Neisseria meningitidis serogroup B (strain ATCC BAA-335 / MC58)</name>
    <dbReference type="NCBI Taxonomy" id="122586"/>
    <lineage>
        <taxon>Bacteria</taxon>
        <taxon>Pseudomonadati</taxon>
        <taxon>Pseudomonadota</taxon>
        <taxon>Betaproteobacteria</taxon>
        <taxon>Neisseriales</taxon>
        <taxon>Neisseriaceae</taxon>
        <taxon>Neisseria</taxon>
    </lineage>
</organism>
<accession>Q7DDM9</accession>
<protein>
    <recommendedName>
        <fullName evidence="1">Protein GrpE</fullName>
    </recommendedName>
    <alternativeName>
        <fullName evidence="1">HSP-70 cofactor</fullName>
    </alternativeName>
</protein>